<name>3SIH_DENJJ</name>
<proteinExistence type="evidence at protein level"/>
<protein>
    <recommendedName>
        <fullName evidence="4">Venom protein SynTx</fullName>
    </recommendedName>
    <alternativeName>
        <fullName evidence="4">Dj_SynTx</fullName>
    </alternativeName>
    <alternativeName>
        <fullName evidence="3">Synergistic-like venom 3FTx protein S2C4 homolog</fullName>
    </alternativeName>
    <alternativeName>
        <fullName evidence="3">T3431</fullName>
    </alternativeName>
</protein>
<reference key="1">
    <citation type="journal article" date="2018" name="J. Proteomics">
        <title>The medical threat of mamba envenoming in sub-Saharan Africa revealed by genus-wide analysis of venom composition, toxicity and antivenomics profiling of available antivenoms.</title>
        <authorList>
            <person name="Ainsworth S."/>
            <person name="Petras D."/>
            <person name="Engmark M."/>
            <person name="Suessmuth R.D."/>
            <person name="Whiteley G."/>
            <person name="Albulescu L.O."/>
            <person name="Kazandjian T.D."/>
            <person name="Wagstaff S.C."/>
            <person name="Rowley P."/>
            <person name="Wuester W."/>
            <person name="Dorrestein P.C."/>
            <person name="Arias A.S."/>
            <person name="Gutierrez J.M."/>
            <person name="Harrison R.A."/>
            <person name="Casewell N.R."/>
            <person name="Calvete J.J."/>
        </authorList>
    </citation>
    <scope>NUCLEOTIDE SEQUENCE [MRNA]</scope>
    <source>
        <tissue>Venom gland</tissue>
    </source>
</reference>
<reference key="2">
    <citation type="journal article" date="2020" name="Biochem. J.">
        <title>Unusual quaternary structure of a homodimeric synergistic-type toxin from mamba snake venom defines its molecular evolution.</title>
        <authorList>
            <person name="Aoki-Shioi N."/>
            <person name="Jobichen C."/>
            <person name="Sivaraman J."/>
            <person name="Kini R.M."/>
        </authorList>
    </citation>
    <scope>PROTEIN SEQUENCE OF 20-84</scope>
    <scope>SUBCELLULAR LOCATION</scope>
    <scope>MASS SPECTROMETRY</scope>
    <scope>X-RAY CRYSTALLOGRAPHY (2.4 ANGSTROMS) OF 20-84</scope>
    <source>
        <tissue>Venom</tissue>
    </source>
</reference>
<dbReference type="PDB" id="7C28">
    <property type="method" value="X-ray"/>
    <property type="resolution" value="2.40 A"/>
    <property type="chains" value="A/B=20-84"/>
</dbReference>
<dbReference type="PDBsum" id="7C28"/>
<dbReference type="SMR" id="P0DQP2"/>
<dbReference type="GO" id="GO:0005576">
    <property type="term" value="C:extracellular region"/>
    <property type="evidence" value="ECO:0007669"/>
    <property type="project" value="UniProtKB-SubCell"/>
</dbReference>
<dbReference type="GO" id="GO:0090729">
    <property type="term" value="F:toxin activity"/>
    <property type="evidence" value="ECO:0007669"/>
    <property type="project" value="UniProtKB-KW"/>
</dbReference>
<dbReference type="CDD" id="cd00206">
    <property type="entry name" value="TFP_snake_toxin"/>
    <property type="match status" value="1"/>
</dbReference>
<dbReference type="FunFam" id="2.10.60.10:FF:000024">
    <property type="entry name" value="Cytotoxin 1"/>
    <property type="match status" value="1"/>
</dbReference>
<dbReference type="Gene3D" id="2.10.60.10">
    <property type="entry name" value="CD59"/>
    <property type="match status" value="1"/>
</dbReference>
<dbReference type="InterPro" id="IPR003572">
    <property type="entry name" value="Cytotoxin_Cobra"/>
</dbReference>
<dbReference type="InterPro" id="IPR003571">
    <property type="entry name" value="Snake_3FTx"/>
</dbReference>
<dbReference type="InterPro" id="IPR045860">
    <property type="entry name" value="Snake_toxin-like_sf"/>
</dbReference>
<dbReference type="InterPro" id="IPR018354">
    <property type="entry name" value="Snake_toxin_con_site"/>
</dbReference>
<dbReference type="InterPro" id="IPR054131">
    <property type="entry name" value="Toxin_cobra-type"/>
</dbReference>
<dbReference type="Pfam" id="PF21947">
    <property type="entry name" value="Toxin_cobra-type"/>
    <property type="match status" value="1"/>
</dbReference>
<dbReference type="PRINTS" id="PR00282">
    <property type="entry name" value="CYTOTOXIN"/>
</dbReference>
<dbReference type="SUPFAM" id="SSF57302">
    <property type="entry name" value="Snake toxin-like"/>
    <property type="match status" value="1"/>
</dbReference>
<dbReference type="PROSITE" id="PS00272">
    <property type="entry name" value="SNAKE_TOXIN"/>
    <property type="match status" value="1"/>
</dbReference>
<keyword id="KW-0002">3D-structure</keyword>
<keyword id="KW-0903">Direct protein sequencing</keyword>
<keyword id="KW-1015">Disulfide bond</keyword>
<keyword id="KW-0964">Secreted</keyword>
<keyword id="KW-0732">Signal</keyword>
<keyword id="KW-0800">Toxin</keyword>
<sequence length="84" mass="9101">TLLLTLVVVTIVCLDLGYTLTCVTDKSFGGVITEECAAGQKICFKNWKKMGPKLYDVKRGCTATCPKADDNGCVKCCNTDKCNK</sequence>
<feature type="signal peptide" evidence="5">
    <location>
        <begin position="1" status="less than"/>
        <end position="19"/>
    </location>
</feature>
<feature type="chain" id="PRO_0000452284" description="Venom protein SynTx" evidence="2">
    <location>
        <begin position="20"/>
        <end position="84"/>
    </location>
</feature>
<feature type="disulfide bond" evidence="2 7">
    <location>
        <begin position="22"/>
        <end position="43"/>
    </location>
</feature>
<feature type="disulfide bond" evidence="2 7">
    <location>
        <begin position="36"/>
        <end position="61"/>
    </location>
</feature>
<feature type="disulfide bond" evidence="2 7">
    <location>
        <begin position="65"/>
        <end position="76"/>
    </location>
</feature>
<feature type="disulfide bond" description="Interchain" evidence="2 7">
    <location>
        <position position="73"/>
    </location>
</feature>
<feature type="disulfide bond" evidence="2 7">
    <location>
        <begin position="77"/>
        <end position="82"/>
    </location>
</feature>
<feature type="non-terminal residue" evidence="5">
    <location>
        <position position="1"/>
    </location>
</feature>
<comment type="function">
    <text evidence="1">This protein shows a synergetic toxic effect in that it enhances the toxicity of other toxins.</text>
</comment>
<comment type="subunit">
    <text evidence="2">Homodimer; disulfide-linked.</text>
</comment>
<comment type="subcellular location">
    <subcellularLocation>
        <location evidence="2">Secreted</location>
    </subcellularLocation>
</comment>
<comment type="tissue specificity">
    <text evidence="6">Expressed by the venom gland.</text>
</comment>
<comment type="mass spectrometry" mass="7584.7" method="Electrospray" evidence="2">
    <text>Homodimer mass is 14,122.9.</text>
</comment>
<comment type="miscellaneous">
    <text evidence="5">Is classified as a P-type cytotoxin, since a proline residue stands at position 32 (Pro-31 in standard classification).</text>
</comment>
<comment type="similarity">
    <text evidence="5">Belongs to the three-finger toxin family. Short-chain subfamily. Aminergic toxin sub-subfamily.</text>
</comment>
<accession>P0DQP2</accession>
<evidence type="ECO:0000250" key="1">
    <source>
        <dbReference type="UniProtKB" id="P01407"/>
    </source>
</evidence>
<evidence type="ECO:0000269" key="2">
    <source>
    </source>
</evidence>
<evidence type="ECO:0000303" key="3">
    <source>
    </source>
</evidence>
<evidence type="ECO:0000303" key="4">
    <source>
    </source>
</evidence>
<evidence type="ECO:0000305" key="5"/>
<evidence type="ECO:0000305" key="6">
    <source>
    </source>
</evidence>
<evidence type="ECO:0007744" key="7">
    <source>
        <dbReference type="PDB" id="7C28"/>
    </source>
</evidence>
<organism>
    <name type="scientific">Dendroaspis jamesoni jamesoni</name>
    <name type="common">Jameson's mamba</name>
    <dbReference type="NCBI Taxonomy" id="2032609"/>
    <lineage>
        <taxon>Eukaryota</taxon>
        <taxon>Metazoa</taxon>
        <taxon>Chordata</taxon>
        <taxon>Craniata</taxon>
        <taxon>Vertebrata</taxon>
        <taxon>Euteleostomi</taxon>
        <taxon>Lepidosauria</taxon>
        <taxon>Squamata</taxon>
        <taxon>Bifurcata</taxon>
        <taxon>Unidentata</taxon>
        <taxon>Episquamata</taxon>
        <taxon>Toxicofera</taxon>
        <taxon>Serpentes</taxon>
        <taxon>Colubroidea</taxon>
        <taxon>Elapidae</taxon>
        <taxon>Elapinae</taxon>
        <taxon>Dendroaspis</taxon>
    </lineage>
</organism>